<accession>P08485</accession>
<gene>
    <name type="primary">Chrm4</name>
    <name type="synonym">Chrm-4</name>
</gene>
<comment type="function">
    <text>The muscarinic acetylcholine receptor mediates various cellular responses, including inhibition of adenylate cyclase, breakdown of phosphoinositides and modulation of potassium channels through the action of G proteins. Primary transducing effect is inhibition of adenylate cyclase.</text>
</comment>
<comment type="interaction">
    <interactant intactId="EBI-7946147">
        <id>P08485</id>
    </interactant>
    <interactant intactId="EBI-2640645">
        <id>P11275</id>
        <label>Camk2a</label>
    </interactant>
    <organismsDiffer>false</organismsDiffer>
    <experiments>10</experiments>
</comment>
<comment type="subcellular location">
    <subcellularLocation>
        <location>Cell membrane</location>
        <topology>Multi-pass membrane protein</topology>
    </subcellularLocation>
    <subcellularLocation>
        <location>Postsynaptic cell membrane</location>
        <topology>Multi-pass membrane protein</topology>
    </subcellularLocation>
</comment>
<comment type="similarity">
    <text evidence="3">Belongs to the G-protein coupled receptor 1 family. Muscarinic acetylcholine receptor subfamily. CHRM4 sub-subfamily.</text>
</comment>
<evidence type="ECO:0000250" key="1"/>
<evidence type="ECO:0000255" key="2"/>
<evidence type="ECO:0000255" key="3">
    <source>
        <dbReference type="PROSITE-ProRule" id="PRU00521"/>
    </source>
</evidence>
<evidence type="ECO:0000256" key="4">
    <source>
        <dbReference type="SAM" id="MobiDB-lite"/>
    </source>
</evidence>
<dbReference type="EMBL" id="M16409">
    <property type="protein sequence ID" value="AAA40663.1"/>
    <property type="status" value="ALT_SEQ"/>
    <property type="molecule type" value="mRNA"/>
</dbReference>
<dbReference type="PIR" id="C94518">
    <property type="entry name" value="C29514"/>
</dbReference>
<dbReference type="RefSeq" id="NP_113735.1">
    <property type="nucleotide sequence ID" value="NM_031547.1"/>
</dbReference>
<dbReference type="CORUM" id="P08485"/>
<dbReference type="FunCoup" id="P08485">
    <property type="interactions" value="161"/>
</dbReference>
<dbReference type="IntAct" id="P08485">
    <property type="interactions" value="1"/>
</dbReference>
<dbReference type="MINT" id="P08485"/>
<dbReference type="STRING" id="10116.ENSRNOP00000023586"/>
<dbReference type="BindingDB" id="P08485"/>
<dbReference type="ChEMBL" id="CHEMBL317"/>
<dbReference type="DrugCentral" id="P08485"/>
<dbReference type="GuidetoPHARMACOLOGY" id="16"/>
<dbReference type="GlyCosmos" id="P08485">
    <property type="glycosylation" value="2 sites, No reported glycans"/>
</dbReference>
<dbReference type="GlyGen" id="P08485">
    <property type="glycosylation" value="2 sites"/>
</dbReference>
<dbReference type="iPTMnet" id="P08485"/>
<dbReference type="PhosphoSitePlus" id="P08485"/>
<dbReference type="PaxDb" id="10116-ENSRNOP00000023586"/>
<dbReference type="GeneID" id="25111"/>
<dbReference type="KEGG" id="rno:25111"/>
<dbReference type="UCSC" id="RGD:2344">
    <property type="organism name" value="rat"/>
</dbReference>
<dbReference type="AGR" id="RGD:2344"/>
<dbReference type="CTD" id="1132"/>
<dbReference type="RGD" id="2344">
    <property type="gene designation" value="Chrm4"/>
</dbReference>
<dbReference type="eggNOG" id="KOG4220">
    <property type="taxonomic scope" value="Eukaryota"/>
</dbReference>
<dbReference type="InParanoid" id="P08485"/>
<dbReference type="OrthoDB" id="10071887at2759"/>
<dbReference type="PhylomeDB" id="P08485"/>
<dbReference type="Reactome" id="R-RNO-390648">
    <property type="pathway name" value="Muscarinic acetylcholine receptors"/>
</dbReference>
<dbReference type="Reactome" id="R-RNO-418594">
    <property type="pathway name" value="G alpha (i) signalling events"/>
</dbReference>
<dbReference type="PRO" id="PR:P08485"/>
<dbReference type="Proteomes" id="UP000002494">
    <property type="component" value="Unplaced"/>
</dbReference>
<dbReference type="GO" id="GO:0032279">
    <property type="term" value="C:asymmetric synapse"/>
    <property type="evidence" value="ECO:0000314"/>
    <property type="project" value="RGD"/>
</dbReference>
<dbReference type="GO" id="GO:0043679">
    <property type="term" value="C:axon terminus"/>
    <property type="evidence" value="ECO:0000314"/>
    <property type="project" value="RGD"/>
</dbReference>
<dbReference type="GO" id="GO:0030425">
    <property type="term" value="C:dendrite"/>
    <property type="evidence" value="ECO:0000318"/>
    <property type="project" value="GO_Central"/>
</dbReference>
<dbReference type="GO" id="GO:0098978">
    <property type="term" value="C:glutamatergic synapse"/>
    <property type="evidence" value="ECO:0000314"/>
    <property type="project" value="SynGO"/>
</dbReference>
<dbReference type="GO" id="GO:0016020">
    <property type="term" value="C:membrane"/>
    <property type="evidence" value="ECO:0000266"/>
    <property type="project" value="RGD"/>
</dbReference>
<dbReference type="GO" id="GO:0043025">
    <property type="term" value="C:neuronal cell body"/>
    <property type="evidence" value="ECO:0000314"/>
    <property type="project" value="RGD"/>
</dbReference>
<dbReference type="GO" id="GO:0005886">
    <property type="term" value="C:plasma membrane"/>
    <property type="evidence" value="ECO:0000318"/>
    <property type="project" value="GO_Central"/>
</dbReference>
<dbReference type="GO" id="GO:0098839">
    <property type="term" value="C:postsynaptic density membrane"/>
    <property type="evidence" value="ECO:0000314"/>
    <property type="project" value="SynGO"/>
</dbReference>
<dbReference type="GO" id="GO:0042734">
    <property type="term" value="C:presynaptic membrane"/>
    <property type="evidence" value="ECO:0000314"/>
    <property type="project" value="SynGO"/>
</dbReference>
<dbReference type="GO" id="GO:0042383">
    <property type="term" value="C:sarcolemma"/>
    <property type="evidence" value="ECO:0000314"/>
    <property type="project" value="RGD"/>
</dbReference>
<dbReference type="GO" id="GO:0045202">
    <property type="term" value="C:synapse"/>
    <property type="evidence" value="ECO:0000318"/>
    <property type="project" value="GO_Central"/>
</dbReference>
<dbReference type="GO" id="GO:0016907">
    <property type="term" value="F:G protein-coupled acetylcholine receptor activity"/>
    <property type="evidence" value="ECO:0000266"/>
    <property type="project" value="RGD"/>
</dbReference>
<dbReference type="GO" id="GO:0005085">
    <property type="term" value="F:guanyl-nucleotide exchange factor activity"/>
    <property type="evidence" value="ECO:0000314"/>
    <property type="project" value="RGD"/>
</dbReference>
<dbReference type="GO" id="GO:0007197">
    <property type="term" value="P:adenylate cyclase-inhibiting G protein-coupled acetylcholine receptor signaling pathway"/>
    <property type="evidence" value="ECO:0000266"/>
    <property type="project" value="RGD"/>
</dbReference>
<dbReference type="GO" id="GO:0007268">
    <property type="term" value="P:chemical synaptic transmission"/>
    <property type="evidence" value="ECO:0000318"/>
    <property type="project" value="GO_Central"/>
</dbReference>
<dbReference type="GO" id="GO:0007187">
    <property type="term" value="P:G protein-coupled receptor signaling pathway, coupled to cyclic nucleotide second messenger"/>
    <property type="evidence" value="ECO:0000318"/>
    <property type="project" value="GO_Central"/>
</dbReference>
<dbReference type="GO" id="GO:0040012">
    <property type="term" value="P:regulation of locomotion"/>
    <property type="evidence" value="ECO:0007669"/>
    <property type="project" value="InterPro"/>
</dbReference>
<dbReference type="CDD" id="cd15298">
    <property type="entry name" value="7tmA_mAChR_M4"/>
    <property type="match status" value="1"/>
</dbReference>
<dbReference type="FunFam" id="1.20.1070.10:FF:000038">
    <property type="entry name" value="Muscarinic acetylcholine receptor"/>
    <property type="match status" value="1"/>
</dbReference>
<dbReference type="FunFam" id="1.20.1070.10:FF:000041">
    <property type="entry name" value="Muscarinic acetylcholine receptor"/>
    <property type="match status" value="1"/>
</dbReference>
<dbReference type="Gene3D" id="1.20.1070.10">
    <property type="entry name" value="Rhodopsin 7-helix transmembrane proteins"/>
    <property type="match status" value="2"/>
</dbReference>
<dbReference type="InterPro" id="IPR000276">
    <property type="entry name" value="GPCR_Rhodpsn"/>
</dbReference>
<dbReference type="InterPro" id="IPR017452">
    <property type="entry name" value="GPCR_Rhodpsn_7TM"/>
</dbReference>
<dbReference type="InterPro" id="IPR001432">
    <property type="entry name" value="Musac_Ach_M4_rcpt"/>
</dbReference>
<dbReference type="InterPro" id="IPR000995">
    <property type="entry name" value="Musac_Ach_rcpt"/>
</dbReference>
<dbReference type="PANTHER" id="PTHR24247">
    <property type="entry name" value="5-HYDROXYTRYPTAMINE RECEPTOR"/>
    <property type="match status" value="1"/>
</dbReference>
<dbReference type="PANTHER" id="PTHR24247:SF180">
    <property type="entry name" value="MUSCARINIC ACETYLCHOLINE RECEPTOR M4"/>
    <property type="match status" value="1"/>
</dbReference>
<dbReference type="Pfam" id="PF00001">
    <property type="entry name" value="7tm_1"/>
    <property type="match status" value="1"/>
</dbReference>
<dbReference type="PRINTS" id="PR00237">
    <property type="entry name" value="GPCRRHODOPSN"/>
</dbReference>
<dbReference type="PRINTS" id="PR00243">
    <property type="entry name" value="MUSCARINICR"/>
</dbReference>
<dbReference type="PRINTS" id="PR00541">
    <property type="entry name" value="MUSCRINICM4R"/>
</dbReference>
<dbReference type="SMART" id="SM01381">
    <property type="entry name" value="7TM_GPCR_Srsx"/>
    <property type="match status" value="1"/>
</dbReference>
<dbReference type="SUPFAM" id="SSF81321">
    <property type="entry name" value="Family A G protein-coupled receptor-like"/>
    <property type="match status" value="1"/>
</dbReference>
<dbReference type="PROSITE" id="PS00237">
    <property type="entry name" value="G_PROTEIN_RECEP_F1_1"/>
    <property type="match status" value="1"/>
</dbReference>
<dbReference type="PROSITE" id="PS50262">
    <property type="entry name" value="G_PROTEIN_RECEP_F1_2"/>
    <property type="match status" value="1"/>
</dbReference>
<organism>
    <name type="scientific">Rattus norvegicus</name>
    <name type="common">Rat</name>
    <dbReference type="NCBI Taxonomy" id="10116"/>
    <lineage>
        <taxon>Eukaryota</taxon>
        <taxon>Metazoa</taxon>
        <taxon>Chordata</taxon>
        <taxon>Craniata</taxon>
        <taxon>Vertebrata</taxon>
        <taxon>Euteleostomi</taxon>
        <taxon>Mammalia</taxon>
        <taxon>Eutheria</taxon>
        <taxon>Euarchontoglires</taxon>
        <taxon>Glires</taxon>
        <taxon>Rodentia</taxon>
        <taxon>Myomorpha</taxon>
        <taxon>Muroidea</taxon>
        <taxon>Muridae</taxon>
        <taxon>Murinae</taxon>
        <taxon>Rattus</taxon>
    </lineage>
</organism>
<proteinExistence type="evidence at protein level"/>
<keyword id="KW-1003">Cell membrane</keyword>
<keyword id="KW-1015">Disulfide bond</keyword>
<keyword id="KW-0297">G-protein coupled receptor</keyword>
<keyword id="KW-0325">Glycoprotein</keyword>
<keyword id="KW-0472">Membrane</keyword>
<keyword id="KW-0597">Phosphoprotein</keyword>
<keyword id="KW-0628">Postsynaptic cell membrane</keyword>
<keyword id="KW-0675">Receptor</keyword>
<keyword id="KW-1185">Reference proteome</keyword>
<keyword id="KW-0770">Synapse</keyword>
<keyword id="KW-0807">Transducer</keyword>
<keyword id="KW-0812">Transmembrane</keyword>
<keyword id="KW-1133">Transmembrane helix</keyword>
<name>ACM4_RAT</name>
<sequence length="478" mass="52921">MXNFTPVNGSSANQSVRLVTAAHNHLETVEMVFIATVTGSLSLVTVVGNILVMLSIKVNRQLQTVNNYFLFSLGCADLIIGAFSMNLYTLYIIKGYWPLGAVVCDLWLALDYVVSNASVMNLLIISFDRYFCVTKPLTYPARRTTKMAGLMIAAAWVLSFVLWAPAILFWQFVVGKRTVPDNQCFIQFLSNPAVTFGTAIAAFYLPVVIMTVLYIHISLASRSRVHKHRPEGPKEKKAKTLAFLKSPLMKPSIKKPPPGGASREELRNGKLEEAPPPALPPPPRPVPDKDTSNESSSGSATQNTKERPPTELSTAEATTPALPAPTLQPRTLNPASKWSKIQIVTKQTGNECVTAIEIVPATPAGMRPAANVARKFASIARNQVRKKRQMAARERKVTRTIFAILLAFILTWTPYNVMVLVNTFCQSCIPERVWSIGYWLCYVNSTINPACYALCNATFKKTFRHLLLCQYRNIGTAR</sequence>
<reference key="1">
    <citation type="journal article" date="1987" name="Science">
        <title>Identification of a family of muscarinic acetylcholine receptor genes.</title>
        <authorList>
            <person name="Bonner T.I."/>
            <person name="Buckley N.J."/>
            <person name="Young A.C."/>
            <person name="Brann M.R."/>
        </authorList>
    </citation>
    <scope>NUCLEOTIDE SEQUENCE [MRNA]</scope>
</reference>
<feature type="chain" id="PRO_0000069039" description="Muscarinic acetylcholine receptor M4">
    <location>
        <begin position="1"/>
        <end position="478"/>
    </location>
</feature>
<feature type="topological domain" description="Extracellular" evidence="1">
    <location>
        <begin position="1"/>
        <end position="30"/>
    </location>
</feature>
<feature type="transmembrane region" description="Helical; Name=1" evidence="1">
    <location>
        <begin position="31"/>
        <end position="53"/>
    </location>
</feature>
<feature type="topological domain" description="Cytoplasmic" evidence="1">
    <location>
        <begin position="54"/>
        <end position="67"/>
    </location>
</feature>
<feature type="transmembrane region" description="Helical; Name=2" evidence="1">
    <location>
        <begin position="68"/>
        <end position="88"/>
    </location>
</feature>
<feature type="topological domain" description="Extracellular" evidence="1">
    <location>
        <begin position="89"/>
        <end position="105"/>
    </location>
</feature>
<feature type="transmembrane region" description="Helical; Name=3" evidence="1">
    <location>
        <begin position="106"/>
        <end position="127"/>
    </location>
</feature>
<feature type="topological domain" description="Cytoplasmic" evidence="1">
    <location>
        <begin position="128"/>
        <end position="147"/>
    </location>
</feature>
<feature type="transmembrane region" description="Helical; Name=4" evidence="1">
    <location>
        <begin position="148"/>
        <end position="170"/>
    </location>
</feature>
<feature type="topological domain" description="Extracellular" evidence="1">
    <location>
        <begin position="171"/>
        <end position="192"/>
    </location>
</feature>
<feature type="transmembrane region" description="Helical; Name=5" evidence="1">
    <location>
        <begin position="193"/>
        <end position="215"/>
    </location>
</feature>
<feature type="topological domain" description="Cytoplasmic" evidence="1">
    <location>
        <begin position="216"/>
        <end position="400"/>
    </location>
</feature>
<feature type="transmembrane region" description="Helical; Name=6" evidence="1">
    <location>
        <begin position="401"/>
        <end position="421"/>
    </location>
</feature>
<feature type="topological domain" description="Extracellular" evidence="1">
    <location>
        <begin position="422"/>
        <end position="435"/>
    </location>
</feature>
<feature type="transmembrane region" description="Helical; Name=7" evidence="1">
    <location>
        <begin position="436"/>
        <end position="455"/>
    </location>
</feature>
<feature type="topological domain" description="Cytoplasmic" evidence="1">
    <location>
        <begin position="456"/>
        <end position="478"/>
    </location>
</feature>
<feature type="region of interest" description="Disordered" evidence="4">
    <location>
        <begin position="271"/>
        <end position="333"/>
    </location>
</feature>
<feature type="compositionally biased region" description="Pro residues" evidence="4">
    <location>
        <begin position="274"/>
        <end position="285"/>
    </location>
</feature>
<feature type="compositionally biased region" description="Polar residues" evidence="4">
    <location>
        <begin position="293"/>
        <end position="303"/>
    </location>
</feature>
<feature type="compositionally biased region" description="Low complexity" evidence="4">
    <location>
        <begin position="310"/>
        <end position="332"/>
    </location>
</feature>
<feature type="modified residue" description="Phosphothreonine" evidence="2">
    <location>
        <position position="458"/>
    </location>
</feature>
<feature type="modified residue" description="Phosphothreonine" evidence="2">
    <location>
        <position position="462"/>
    </location>
</feature>
<feature type="modified residue" description="Phosphothreonine" evidence="2">
    <location>
        <position position="476"/>
    </location>
</feature>
<feature type="glycosylation site" description="N-linked (GlcNAc...) asparagine" evidence="2">
    <location>
        <position position="8"/>
    </location>
</feature>
<feature type="glycosylation site" description="N-linked (GlcNAc...) asparagine" evidence="2">
    <location>
        <position position="13"/>
    </location>
</feature>
<feature type="disulfide bond" evidence="3">
    <location>
        <begin position="104"/>
        <end position="184"/>
    </location>
</feature>
<protein>
    <recommendedName>
        <fullName>Muscarinic acetylcholine receptor M4</fullName>
    </recommendedName>
</protein>